<accession>Q47270</accession>
<accession>Q2MBN3</accession>
<gene>
    <name type="primary">ninE</name>
    <name type="ordered locus">b0548</name>
    <name type="ordered locus">JW0536</name>
</gene>
<sequence length="56" mass="6494">MATPLIRVMNGHIYRVPNRRKRKPELKPSEIPTLLGYTASLVDKKWLRLAARRSHG</sequence>
<reference key="1">
    <citation type="journal article" date="1996" name="J. Mol. Biol.">
        <title>Holliday junction resolvases encoded by homologous rusA genes in Escherichia coli K-12 and phage 82.</title>
        <authorList>
            <person name="Mahdi A.A."/>
            <person name="Sharples G.J."/>
            <person name="Mandal T.N."/>
            <person name="Lloyd R.G."/>
        </authorList>
    </citation>
    <scope>NUCLEOTIDE SEQUENCE [GENOMIC DNA]</scope>
    <source>
        <strain>K12</strain>
    </source>
</reference>
<reference key="2">
    <citation type="journal article" date="1997" name="Science">
        <title>The complete genome sequence of Escherichia coli K-12.</title>
        <authorList>
            <person name="Blattner F.R."/>
            <person name="Plunkett G. III"/>
            <person name="Bloch C.A."/>
            <person name="Perna N.T."/>
            <person name="Burland V."/>
            <person name="Riley M."/>
            <person name="Collado-Vides J."/>
            <person name="Glasner J.D."/>
            <person name="Rode C.K."/>
            <person name="Mayhew G.F."/>
            <person name="Gregor J."/>
            <person name="Davis N.W."/>
            <person name="Kirkpatrick H.A."/>
            <person name="Goeden M.A."/>
            <person name="Rose D.J."/>
            <person name="Mau B."/>
            <person name="Shao Y."/>
        </authorList>
    </citation>
    <scope>NUCLEOTIDE SEQUENCE [LARGE SCALE GENOMIC DNA]</scope>
    <source>
        <strain>K12 / MG1655 / ATCC 47076</strain>
    </source>
</reference>
<reference key="3">
    <citation type="journal article" date="2006" name="Mol. Syst. Biol.">
        <title>Highly accurate genome sequences of Escherichia coli K-12 strains MG1655 and W3110.</title>
        <authorList>
            <person name="Hayashi K."/>
            <person name="Morooka N."/>
            <person name="Yamamoto Y."/>
            <person name="Fujita K."/>
            <person name="Isono K."/>
            <person name="Choi S."/>
            <person name="Ohtsubo E."/>
            <person name="Baba T."/>
            <person name="Wanner B.L."/>
            <person name="Mori H."/>
            <person name="Horiuchi T."/>
        </authorList>
    </citation>
    <scope>NUCLEOTIDE SEQUENCE [LARGE SCALE GENOMIC DNA]</scope>
    <source>
        <strain>K12 / W3110 / ATCC 27325 / DSM 5911</strain>
    </source>
</reference>
<protein>
    <recommendedName>
        <fullName evidence="1">Prophage NinE homolog</fullName>
    </recommendedName>
    <alternativeName>
        <fullName>Protein NinE homolog from lambdoid prophage DLP12</fullName>
    </alternativeName>
</protein>
<comment type="miscellaneous">
    <text>Encoded by the cryptic lambdoid prophage DLP12.</text>
</comment>
<comment type="similarity">
    <text evidence="1">Belongs to the ninE family.</text>
</comment>
<evidence type="ECO:0000305" key="1"/>
<organism>
    <name type="scientific">Escherichia coli (strain K12)</name>
    <dbReference type="NCBI Taxonomy" id="83333"/>
    <lineage>
        <taxon>Bacteria</taxon>
        <taxon>Pseudomonadati</taxon>
        <taxon>Pseudomonadota</taxon>
        <taxon>Gammaproteobacteria</taxon>
        <taxon>Enterobacterales</taxon>
        <taxon>Enterobacteriaceae</taxon>
        <taxon>Escherichia</taxon>
    </lineage>
</organism>
<feature type="chain" id="PRO_0000077621" description="Prophage NinE homolog">
    <location>
        <begin position="1"/>
        <end position="56"/>
    </location>
</feature>
<proteinExistence type="inferred from homology"/>
<name>NINE_ECOLI</name>
<keyword id="KW-1185">Reference proteome</keyword>
<dbReference type="EMBL" id="X92587">
    <property type="protein sequence ID" value="CAA63319.1"/>
    <property type="molecule type" value="Genomic_DNA"/>
</dbReference>
<dbReference type="EMBL" id="U00096">
    <property type="protein sequence ID" value="AAC73649.1"/>
    <property type="molecule type" value="Genomic_DNA"/>
</dbReference>
<dbReference type="EMBL" id="AP009048">
    <property type="protein sequence ID" value="BAE76323.1"/>
    <property type="molecule type" value="Genomic_DNA"/>
</dbReference>
<dbReference type="PIR" id="S66588">
    <property type="entry name" value="S66588"/>
</dbReference>
<dbReference type="RefSeq" id="NP_415080.1">
    <property type="nucleotide sequence ID" value="NC_000913.3"/>
</dbReference>
<dbReference type="RefSeq" id="WP_000224915.1">
    <property type="nucleotide sequence ID" value="NZ_LN832404.1"/>
</dbReference>
<dbReference type="BioGRID" id="4259877">
    <property type="interactions" value="145"/>
</dbReference>
<dbReference type="FunCoup" id="Q47270">
    <property type="interactions" value="42"/>
</dbReference>
<dbReference type="IntAct" id="Q47270">
    <property type="interactions" value="3"/>
</dbReference>
<dbReference type="STRING" id="511145.b0548"/>
<dbReference type="PaxDb" id="511145-b0548"/>
<dbReference type="EnsemblBacteria" id="AAC73649">
    <property type="protein sequence ID" value="AAC73649"/>
    <property type="gene ID" value="b0548"/>
</dbReference>
<dbReference type="GeneID" id="945151"/>
<dbReference type="KEGG" id="ecj:JW0536"/>
<dbReference type="KEGG" id="eco:b0548"/>
<dbReference type="KEGG" id="ecoc:C3026_02700"/>
<dbReference type="PATRIC" id="fig|83333.103.peg.1314"/>
<dbReference type="EchoBASE" id="EB4034"/>
<dbReference type="eggNOG" id="ENOG50332HC">
    <property type="taxonomic scope" value="Bacteria"/>
</dbReference>
<dbReference type="HOGENOM" id="CLU_193659_0_0_6"/>
<dbReference type="InParanoid" id="Q47270"/>
<dbReference type="OMA" id="VDQKWLR"/>
<dbReference type="OrthoDB" id="6570503at2"/>
<dbReference type="BioCyc" id="EcoCyc:G6304-MONOMER"/>
<dbReference type="PRO" id="PR:Q47270"/>
<dbReference type="Proteomes" id="UP000000625">
    <property type="component" value="Chromosome"/>
</dbReference>
<dbReference type="NCBIfam" id="NF007245">
    <property type="entry name" value="PRK09689.1"/>
    <property type="match status" value="1"/>
</dbReference>